<name>RL21_MYCMS</name>
<evidence type="ECO:0000255" key="1">
    <source>
        <dbReference type="HAMAP-Rule" id="MF_01363"/>
    </source>
</evidence>
<evidence type="ECO:0000305" key="2"/>
<dbReference type="EMBL" id="BX293980">
    <property type="protein sequence ID" value="CAE77188.1"/>
    <property type="molecule type" value="Genomic_DNA"/>
</dbReference>
<dbReference type="RefSeq" id="NP_975546.1">
    <property type="nucleotide sequence ID" value="NC_005364.2"/>
</dbReference>
<dbReference type="RefSeq" id="WP_011166743.1">
    <property type="nucleotide sequence ID" value="NC_005364.2"/>
</dbReference>
<dbReference type="SMR" id="Q6MT48"/>
<dbReference type="STRING" id="272632.MSC_0562"/>
<dbReference type="KEGG" id="mmy:MSC_0562"/>
<dbReference type="PATRIC" id="fig|272632.4.peg.606"/>
<dbReference type="eggNOG" id="COG0261">
    <property type="taxonomic scope" value="Bacteria"/>
</dbReference>
<dbReference type="HOGENOM" id="CLU_061463_3_1_14"/>
<dbReference type="Proteomes" id="UP000001016">
    <property type="component" value="Chromosome"/>
</dbReference>
<dbReference type="GO" id="GO:0005737">
    <property type="term" value="C:cytoplasm"/>
    <property type="evidence" value="ECO:0007669"/>
    <property type="project" value="UniProtKB-ARBA"/>
</dbReference>
<dbReference type="GO" id="GO:1990904">
    <property type="term" value="C:ribonucleoprotein complex"/>
    <property type="evidence" value="ECO:0007669"/>
    <property type="project" value="UniProtKB-KW"/>
</dbReference>
<dbReference type="GO" id="GO:0005840">
    <property type="term" value="C:ribosome"/>
    <property type="evidence" value="ECO:0007669"/>
    <property type="project" value="UniProtKB-KW"/>
</dbReference>
<dbReference type="GO" id="GO:0019843">
    <property type="term" value="F:rRNA binding"/>
    <property type="evidence" value="ECO:0007669"/>
    <property type="project" value="UniProtKB-UniRule"/>
</dbReference>
<dbReference type="GO" id="GO:0003735">
    <property type="term" value="F:structural constituent of ribosome"/>
    <property type="evidence" value="ECO:0007669"/>
    <property type="project" value="InterPro"/>
</dbReference>
<dbReference type="GO" id="GO:0006412">
    <property type="term" value="P:translation"/>
    <property type="evidence" value="ECO:0007669"/>
    <property type="project" value="UniProtKB-UniRule"/>
</dbReference>
<dbReference type="HAMAP" id="MF_01363">
    <property type="entry name" value="Ribosomal_bL21"/>
    <property type="match status" value="1"/>
</dbReference>
<dbReference type="InterPro" id="IPR028909">
    <property type="entry name" value="bL21-like"/>
</dbReference>
<dbReference type="InterPro" id="IPR036164">
    <property type="entry name" value="bL21-like_sf"/>
</dbReference>
<dbReference type="InterPro" id="IPR001787">
    <property type="entry name" value="Ribosomal_bL21"/>
</dbReference>
<dbReference type="InterPro" id="IPR018258">
    <property type="entry name" value="Ribosomal_bL21_CS"/>
</dbReference>
<dbReference type="NCBIfam" id="TIGR00061">
    <property type="entry name" value="L21"/>
    <property type="match status" value="1"/>
</dbReference>
<dbReference type="PANTHER" id="PTHR21349">
    <property type="entry name" value="50S RIBOSOMAL PROTEIN L21"/>
    <property type="match status" value="1"/>
</dbReference>
<dbReference type="PANTHER" id="PTHR21349:SF0">
    <property type="entry name" value="LARGE RIBOSOMAL SUBUNIT PROTEIN BL21M"/>
    <property type="match status" value="1"/>
</dbReference>
<dbReference type="Pfam" id="PF00829">
    <property type="entry name" value="Ribosomal_L21p"/>
    <property type="match status" value="1"/>
</dbReference>
<dbReference type="SUPFAM" id="SSF141091">
    <property type="entry name" value="L21p-like"/>
    <property type="match status" value="1"/>
</dbReference>
<dbReference type="PROSITE" id="PS01169">
    <property type="entry name" value="RIBOSOMAL_L21"/>
    <property type="match status" value="1"/>
</dbReference>
<comment type="function">
    <text evidence="1">This protein binds to 23S rRNA in the presence of protein L20.</text>
</comment>
<comment type="subunit">
    <text evidence="1">Part of the 50S ribosomal subunit. Contacts protein L20.</text>
</comment>
<comment type="similarity">
    <text evidence="1">Belongs to the bacterial ribosomal protein bL21 family.</text>
</comment>
<sequence length="100" mass="11303">MFAIIRTGGKQIKVEQGQEIFIEKIKGEVNDKIAFDEILMIDGKIGTPTIKGAKVLGTIIKQGKAKKIRVIRYHPKKNVNKIYGHRQPYTKVKIDEISAK</sequence>
<proteinExistence type="inferred from homology"/>
<accession>Q6MT48</accession>
<protein>
    <recommendedName>
        <fullName evidence="1">Large ribosomal subunit protein bL21</fullName>
    </recommendedName>
    <alternativeName>
        <fullName evidence="2">50S ribosomal protein L21</fullName>
    </alternativeName>
</protein>
<keyword id="KW-1185">Reference proteome</keyword>
<keyword id="KW-0687">Ribonucleoprotein</keyword>
<keyword id="KW-0689">Ribosomal protein</keyword>
<keyword id="KW-0694">RNA-binding</keyword>
<keyword id="KW-0699">rRNA-binding</keyword>
<feature type="chain" id="PRO_0000269346" description="Large ribosomal subunit protein bL21">
    <location>
        <begin position="1"/>
        <end position="100"/>
    </location>
</feature>
<organism>
    <name type="scientific">Mycoplasma mycoides subsp. mycoides SC (strain CCUG 32753 / NCTC 10114 / PG1)</name>
    <dbReference type="NCBI Taxonomy" id="272632"/>
    <lineage>
        <taxon>Bacteria</taxon>
        <taxon>Bacillati</taxon>
        <taxon>Mycoplasmatota</taxon>
        <taxon>Mollicutes</taxon>
        <taxon>Mycoplasmataceae</taxon>
        <taxon>Mycoplasma</taxon>
    </lineage>
</organism>
<reference key="1">
    <citation type="journal article" date="2004" name="Genome Res.">
        <title>The genome sequence of Mycoplasma mycoides subsp. mycoides SC type strain PG1T, the causative agent of contagious bovine pleuropneumonia (CBPP).</title>
        <authorList>
            <person name="Westberg J."/>
            <person name="Persson A."/>
            <person name="Holmberg A."/>
            <person name="Goesmann A."/>
            <person name="Lundeberg J."/>
            <person name="Johansson K.-E."/>
            <person name="Pettersson B."/>
            <person name="Uhlen M."/>
        </authorList>
    </citation>
    <scope>NUCLEOTIDE SEQUENCE [LARGE SCALE GENOMIC DNA]</scope>
    <source>
        <strain>CCUG 32753 / NCTC 10114 / PG1</strain>
    </source>
</reference>
<gene>
    <name evidence="1" type="primary">rplU</name>
    <name type="ordered locus">MSC_0562</name>
</gene>